<sequence>MDLPGPIHDFLLVFLGSGLIVGGLGVVLLPNPIFSAFSLGFVLVCISLLYILANSHFVAAAQLLIYVGAINVLIIFAVMFMNDSEYFTDFNLWTVGDGITSLVCTTLLFSLISTILDTSWYGVIWTTRLNQILEQDLISNSQQIGSHLSTDFFLPFELISIILLVALIGAISVARQ</sequence>
<proteinExistence type="inferred from homology"/>
<name>NU6C_ARAHI</name>
<dbReference type="EC" id="7.1.1.-"/>
<dbReference type="EMBL" id="AP009369">
    <property type="protein sequence ID" value="BAF50078.1"/>
    <property type="molecule type" value="Genomic_DNA"/>
</dbReference>
<dbReference type="RefSeq" id="YP_001123253.1">
    <property type="nucleotide sequence ID" value="NC_009268.1"/>
</dbReference>
<dbReference type="SMR" id="A4QK73"/>
<dbReference type="GeneID" id="4962538"/>
<dbReference type="GO" id="GO:0009535">
    <property type="term" value="C:chloroplast thylakoid membrane"/>
    <property type="evidence" value="ECO:0007669"/>
    <property type="project" value="UniProtKB-SubCell"/>
</dbReference>
<dbReference type="GO" id="GO:0008137">
    <property type="term" value="F:NADH dehydrogenase (ubiquinone) activity"/>
    <property type="evidence" value="ECO:0007669"/>
    <property type="project" value="InterPro"/>
</dbReference>
<dbReference type="GO" id="GO:0048038">
    <property type="term" value="F:quinone binding"/>
    <property type="evidence" value="ECO:0007669"/>
    <property type="project" value="UniProtKB-KW"/>
</dbReference>
<dbReference type="FunFam" id="1.20.120.1200:FF:000002">
    <property type="entry name" value="NAD(P)H-quinone oxidoreductase subunit 6, chloroplastic"/>
    <property type="match status" value="1"/>
</dbReference>
<dbReference type="Gene3D" id="1.20.120.1200">
    <property type="entry name" value="NADH-ubiquinone/plastoquinone oxidoreductase chain 6, subunit NuoJ"/>
    <property type="match status" value="1"/>
</dbReference>
<dbReference type="InterPro" id="IPR050290">
    <property type="entry name" value="NAD(P)H-Q_Oxidoreduct_6"/>
</dbReference>
<dbReference type="InterPro" id="IPR001457">
    <property type="entry name" value="NADH_UbQ/plastoQ_OxRdtase_su6"/>
</dbReference>
<dbReference type="InterPro" id="IPR042106">
    <property type="entry name" value="Nuo/plastoQ_OxRdtase_6_NuoJ"/>
</dbReference>
<dbReference type="PANTHER" id="PTHR48479">
    <property type="entry name" value="NAD(P)H-QUINONE OXIDOREDUCTASE SUBUNIT 6, CHLOROPLASTIC"/>
    <property type="match status" value="1"/>
</dbReference>
<dbReference type="PANTHER" id="PTHR48479:SF1">
    <property type="entry name" value="NAD(P)H-QUINONE OXIDOREDUCTASE SUBUNIT 6, CHLOROPLASTIC"/>
    <property type="match status" value="1"/>
</dbReference>
<dbReference type="Pfam" id="PF00499">
    <property type="entry name" value="Oxidored_q3"/>
    <property type="match status" value="1"/>
</dbReference>
<organism>
    <name type="scientific">Arabis hirsuta</name>
    <name type="common">Hairy rock-cress</name>
    <name type="synonym">Turritis hirsuta</name>
    <dbReference type="NCBI Taxonomy" id="78191"/>
    <lineage>
        <taxon>Eukaryota</taxon>
        <taxon>Viridiplantae</taxon>
        <taxon>Streptophyta</taxon>
        <taxon>Embryophyta</taxon>
        <taxon>Tracheophyta</taxon>
        <taxon>Spermatophyta</taxon>
        <taxon>Magnoliopsida</taxon>
        <taxon>eudicotyledons</taxon>
        <taxon>Gunneridae</taxon>
        <taxon>Pentapetalae</taxon>
        <taxon>rosids</taxon>
        <taxon>malvids</taxon>
        <taxon>Brassicales</taxon>
        <taxon>Brassicaceae</taxon>
        <taxon>Arabideae</taxon>
        <taxon>Arabis</taxon>
    </lineage>
</organism>
<gene>
    <name type="primary">ndhG</name>
</gene>
<protein>
    <recommendedName>
        <fullName>NAD(P)H-quinone oxidoreductase subunit 6, chloroplastic</fullName>
        <ecNumber>7.1.1.-</ecNumber>
    </recommendedName>
    <alternativeName>
        <fullName>NAD(P)H dehydrogenase subunit 6</fullName>
    </alternativeName>
    <alternativeName>
        <fullName>NADH-plastoquinone oxidoreductase subunit 6</fullName>
    </alternativeName>
</protein>
<keyword id="KW-0150">Chloroplast</keyword>
<keyword id="KW-0472">Membrane</keyword>
<keyword id="KW-0520">NAD</keyword>
<keyword id="KW-0521">NADP</keyword>
<keyword id="KW-0934">Plastid</keyword>
<keyword id="KW-0618">Plastoquinone</keyword>
<keyword id="KW-0874">Quinone</keyword>
<keyword id="KW-0793">Thylakoid</keyword>
<keyword id="KW-1278">Translocase</keyword>
<keyword id="KW-0812">Transmembrane</keyword>
<keyword id="KW-1133">Transmembrane helix</keyword>
<keyword id="KW-0813">Transport</keyword>
<geneLocation type="chloroplast"/>
<reference key="1">
    <citation type="submission" date="2007-03" db="EMBL/GenBank/DDBJ databases">
        <title>Sequencing analysis of Arabis hirsuta chloroplast DNA.</title>
        <authorList>
            <person name="Hosouchi T."/>
            <person name="Tsuruoka H."/>
            <person name="Kotani H."/>
        </authorList>
    </citation>
    <scope>NUCLEOTIDE SEQUENCE [LARGE SCALE GENOMIC DNA]</scope>
</reference>
<comment type="function">
    <text evidence="1">NDH shuttles electrons from NAD(P)H:plastoquinone, via FMN and iron-sulfur (Fe-S) centers, to quinones in the photosynthetic chain and possibly in a chloroplast respiratory chain. The immediate electron acceptor for the enzyme in this species is believed to be plastoquinone. Couples the redox reaction to proton translocation, and thus conserves the redox energy in a proton gradient (By similarity).</text>
</comment>
<comment type="catalytic activity">
    <reaction>
        <text>a plastoquinone + NADH + (n+1) H(+)(in) = a plastoquinol + NAD(+) + n H(+)(out)</text>
        <dbReference type="Rhea" id="RHEA:42608"/>
        <dbReference type="Rhea" id="RHEA-COMP:9561"/>
        <dbReference type="Rhea" id="RHEA-COMP:9562"/>
        <dbReference type="ChEBI" id="CHEBI:15378"/>
        <dbReference type="ChEBI" id="CHEBI:17757"/>
        <dbReference type="ChEBI" id="CHEBI:57540"/>
        <dbReference type="ChEBI" id="CHEBI:57945"/>
        <dbReference type="ChEBI" id="CHEBI:62192"/>
    </reaction>
</comment>
<comment type="catalytic activity">
    <reaction>
        <text>a plastoquinone + NADPH + (n+1) H(+)(in) = a plastoquinol + NADP(+) + n H(+)(out)</text>
        <dbReference type="Rhea" id="RHEA:42612"/>
        <dbReference type="Rhea" id="RHEA-COMP:9561"/>
        <dbReference type="Rhea" id="RHEA-COMP:9562"/>
        <dbReference type="ChEBI" id="CHEBI:15378"/>
        <dbReference type="ChEBI" id="CHEBI:17757"/>
        <dbReference type="ChEBI" id="CHEBI:57783"/>
        <dbReference type="ChEBI" id="CHEBI:58349"/>
        <dbReference type="ChEBI" id="CHEBI:62192"/>
    </reaction>
</comment>
<comment type="subunit">
    <text evidence="1">NDH is composed of at least 16 different subunits, 5 of which are encoded in the nucleus.</text>
</comment>
<comment type="subcellular location">
    <subcellularLocation>
        <location evidence="1">Plastid</location>
        <location evidence="1">Chloroplast thylakoid membrane</location>
        <topology evidence="1">Multi-pass membrane protein</topology>
    </subcellularLocation>
</comment>
<comment type="similarity">
    <text evidence="3">Belongs to the complex I subunit 6 family.</text>
</comment>
<feature type="chain" id="PRO_0000360228" description="NAD(P)H-quinone oxidoreductase subunit 6, chloroplastic">
    <location>
        <begin position="1"/>
        <end position="176"/>
    </location>
</feature>
<feature type="transmembrane region" description="Helical" evidence="2">
    <location>
        <begin position="10"/>
        <end position="30"/>
    </location>
</feature>
<feature type="transmembrane region" description="Helical" evidence="2">
    <location>
        <begin position="33"/>
        <end position="53"/>
    </location>
</feature>
<feature type="transmembrane region" description="Helical" evidence="2">
    <location>
        <begin position="61"/>
        <end position="81"/>
    </location>
</feature>
<feature type="transmembrane region" description="Helical" evidence="2">
    <location>
        <begin position="92"/>
        <end position="112"/>
    </location>
</feature>
<feature type="transmembrane region" description="Helical" evidence="2">
    <location>
        <begin position="152"/>
        <end position="172"/>
    </location>
</feature>
<accession>A4QK73</accession>
<evidence type="ECO:0000250" key="1"/>
<evidence type="ECO:0000255" key="2"/>
<evidence type="ECO:0000305" key="3"/>